<protein>
    <recommendedName>
        <fullName>4-alpha-glucanotransferase</fullName>
        <ecNumber>2.4.1.25</ecNumber>
    </recommendedName>
    <alternativeName>
        <fullName>Amylomaltase</fullName>
    </alternativeName>
    <alternativeName>
        <fullName>Disproportionating enzyme</fullName>
        <shortName>D-enzyme</shortName>
    </alternativeName>
    <alternativeName>
        <fullName>Maltodextrin glycosyltransferase</fullName>
    </alternativeName>
</protein>
<keyword id="KW-0106">Calcium</keyword>
<keyword id="KW-0119">Carbohydrate metabolism</keyword>
<keyword id="KW-0963">Cytoplasm</keyword>
<keyword id="KW-0328">Glycosyltransferase</keyword>
<keyword id="KW-0479">Metal-binding</keyword>
<keyword id="KW-0808">Transferase</keyword>
<organism>
    <name type="scientific">Thermotoga neapolitana</name>
    <dbReference type="NCBI Taxonomy" id="2337"/>
    <lineage>
        <taxon>Bacteria</taxon>
        <taxon>Thermotogati</taxon>
        <taxon>Thermotogota</taxon>
        <taxon>Thermotogae</taxon>
        <taxon>Thermotogales</taxon>
        <taxon>Thermotogaceae</taxon>
        <taxon>Thermotoga</taxon>
    </lineage>
</organism>
<comment type="function">
    <text evidence="2">Hydrolyzes the 1,4-alpha-glycoside bonds in oligomeric and polymeric 1,4-alpha-glucans and transfers oligosaccharides (maltotriose being the shortest one) to acceptor maltodextrins.</text>
</comment>
<comment type="catalytic activity">
    <reaction evidence="2">
        <text>Transfers a segment of a (1-&gt;4)-alpha-D-glucan to a new position in an acceptor, which may be glucose or a (1-&gt;4)-alpha-D-glucan.</text>
        <dbReference type="EC" id="2.4.1.25"/>
    </reaction>
</comment>
<comment type="cofactor">
    <cofactor evidence="1">
        <name>Ca(2+)</name>
        <dbReference type="ChEBI" id="CHEBI:29108"/>
    </cofactor>
    <text evidence="1">Binds 1 Ca(2+) ion per subunit.</text>
</comment>
<comment type="biophysicochemical properties">
    <phDependence>
        <text evidence="2">Optimum pH is 7.0.</text>
    </phDependence>
    <temperatureDependence>
        <text evidence="2">Optimum temperature is 85 degrees Celsius.</text>
    </temperatureDependence>
</comment>
<comment type="subunit">
    <text evidence="1">Monomer.</text>
</comment>
<comment type="subcellular location">
    <subcellularLocation>
        <location>Cytoplasm</location>
    </subcellularLocation>
</comment>
<comment type="similarity">
    <text evidence="3">Belongs to the glycosyl hydrolase 13 family.</text>
</comment>
<evidence type="ECO:0000250" key="1"/>
<evidence type="ECO:0000269" key="2">
    <source ref="1"/>
</evidence>
<evidence type="ECO:0000305" key="3"/>
<sequence>MIGYQIYVRSFRDGNFDGVGDFKGLKGAISYLKELGVDFVWLMPVFSSISFHGYDVVDFYSFKAEYGDEKDFREMIEAFHDNGIKVVLDLPIHHTGFLHTWFQKALKGDPHYRDYYVWASEKTDLDERREWDNERIWHPLEDGRFYRGLFGPLSPDLNYDNPQVFEEMKKVVYHLLEMGVDGFRFDAAKHMRDTLEQNVRFWRYFLSDIEGIFLAEIWAESKVVDEHGRIFGYMLNFDTSHCIKEAVWKENFKVLIESIERALVGKDYLPVNFTSNHDMSRLASFEGGLSEEKVKLSLSILFTLPGVPLIFYGDELGMKGIYRKPNTEVVLDPFPWSENISLEGQTFWKWPAYNSPFSGVSVEYQKKKRDSILLHIMKWTGFRKENHWLDRANIEFLCKEEKLLHVYRLVDEGRSLKVIHNLSNGEMVFEGVRVQPYSTEVI</sequence>
<reference key="1">
    <citation type="journal article" date="1999" name="Mol. Biol. (Mosk.)">
        <title>Gene and properties of thermostable 4-alpha-glucanotransferase of Thermotoga neapolitana.</title>
        <authorList>
            <person name="Berezina O.V."/>
            <person name="Zverlov V.V."/>
            <person name="Lunina N.A."/>
            <person name="Chekanovskaya L.A."/>
            <person name="Dubinina E.N."/>
            <person name="Liebl W."/>
            <person name="Velikodvorskaya G.A."/>
        </authorList>
    </citation>
    <scope>NUCLEOTIDE SEQUENCE [GENOMIC DNA]</scope>
    <scope>FUNCTION</scope>
    <scope>CATALYTIC ACTIVITY</scope>
    <scope>BIOPHYSICOCHEMICAL PROPERTIES</scope>
    <source>
        <strain>Z2706-MC24</strain>
    </source>
</reference>
<proteinExistence type="evidence at protein level"/>
<feature type="chain" id="PRO_0000054337" description="4-alpha-glucanotransferase">
    <location>
        <begin position="1"/>
        <end position="442"/>
    </location>
</feature>
<feature type="active site" description="Nucleophile" evidence="1">
    <location>
        <position position="186"/>
    </location>
</feature>
<feature type="active site" description="Proton donor" evidence="1">
    <location>
        <position position="216"/>
    </location>
</feature>
<feature type="binding site" evidence="1">
    <location>
        <position position="13"/>
    </location>
    <ligand>
        <name>Ca(2+)</name>
        <dbReference type="ChEBI" id="CHEBI:29108"/>
    </ligand>
</feature>
<feature type="binding site" evidence="1">
    <location>
        <position position="15"/>
    </location>
    <ligand>
        <name>Ca(2+)</name>
        <dbReference type="ChEBI" id="CHEBI:29108"/>
    </ligand>
</feature>
<feature type="binding site" evidence="1">
    <location>
        <position position="17"/>
    </location>
    <ligand>
        <name>Ca(2+)</name>
        <dbReference type="ChEBI" id="CHEBI:29108"/>
    </ligand>
</feature>
<feature type="binding site" evidence="1">
    <location>
        <position position="19"/>
    </location>
    <ligand>
        <name>Ca(2+)</name>
        <dbReference type="ChEBI" id="CHEBI:29108"/>
    </ligand>
</feature>
<feature type="binding site" evidence="1">
    <location>
        <position position="21"/>
    </location>
    <ligand>
        <name>Ca(2+)</name>
        <dbReference type="ChEBI" id="CHEBI:29108"/>
    </ligand>
</feature>
<feature type="site" description="Transition state stabilizer" evidence="1">
    <location>
        <position position="278"/>
    </location>
</feature>
<dbReference type="EC" id="2.4.1.25"/>
<dbReference type="EMBL" id="AJ009831">
    <property type="protein sequence ID" value="CAA08864.1"/>
    <property type="molecule type" value="Genomic_DNA"/>
</dbReference>
<dbReference type="SMR" id="O86956"/>
<dbReference type="CAZy" id="GH13">
    <property type="family name" value="Glycoside Hydrolase Family 13"/>
</dbReference>
<dbReference type="GO" id="GO:0005737">
    <property type="term" value="C:cytoplasm"/>
    <property type="evidence" value="ECO:0007669"/>
    <property type="project" value="UniProtKB-SubCell"/>
</dbReference>
<dbReference type="GO" id="GO:0004134">
    <property type="term" value="F:4-alpha-glucanotransferase activity"/>
    <property type="evidence" value="ECO:0007669"/>
    <property type="project" value="UniProtKB-EC"/>
</dbReference>
<dbReference type="GO" id="GO:0004556">
    <property type="term" value="F:alpha-amylase activity"/>
    <property type="evidence" value="ECO:0007669"/>
    <property type="project" value="InterPro"/>
</dbReference>
<dbReference type="GO" id="GO:0046872">
    <property type="term" value="F:metal ion binding"/>
    <property type="evidence" value="ECO:0007669"/>
    <property type="project" value="UniProtKB-KW"/>
</dbReference>
<dbReference type="GO" id="GO:0009313">
    <property type="term" value="P:oligosaccharide catabolic process"/>
    <property type="evidence" value="ECO:0007669"/>
    <property type="project" value="TreeGrafter"/>
</dbReference>
<dbReference type="FunFam" id="3.90.400.10:FF:000010">
    <property type="entry name" value="4-alpha-glucanotransferase"/>
    <property type="match status" value="1"/>
</dbReference>
<dbReference type="Gene3D" id="3.20.20.80">
    <property type="entry name" value="Glycosidases"/>
    <property type="match status" value="1"/>
</dbReference>
<dbReference type="Gene3D" id="2.60.40.1180">
    <property type="entry name" value="Golgi alpha-mannosidase II"/>
    <property type="match status" value="1"/>
</dbReference>
<dbReference type="Gene3D" id="3.90.400.10">
    <property type="entry name" value="Oligo-1,6-glucosidase, Domain 2"/>
    <property type="match status" value="1"/>
</dbReference>
<dbReference type="InterPro" id="IPR015261">
    <property type="entry name" value="4-alpha-glucanotransf_C"/>
</dbReference>
<dbReference type="InterPro" id="IPR006046">
    <property type="entry name" value="Alpha_amylase"/>
</dbReference>
<dbReference type="InterPro" id="IPR006047">
    <property type="entry name" value="Glyco_hydro_13_cat_dom"/>
</dbReference>
<dbReference type="InterPro" id="IPR013780">
    <property type="entry name" value="Glyco_hydro_b"/>
</dbReference>
<dbReference type="InterPro" id="IPR017853">
    <property type="entry name" value="Glycoside_hydrolase_SF"/>
</dbReference>
<dbReference type="InterPro" id="IPR045857">
    <property type="entry name" value="O16G_dom_2"/>
</dbReference>
<dbReference type="PANTHER" id="PTHR10357">
    <property type="entry name" value="ALPHA-AMYLASE FAMILY MEMBER"/>
    <property type="match status" value="1"/>
</dbReference>
<dbReference type="PANTHER" id="PTHR10357:SF179">
    <property type="entry name" value="NEUTRAL AND BASIC AMINO ACID TRANSPORT PROTEIN RBAT"/>
    <property type="match status" value="1"/>
</dbReference>
<dbReference type="Pfam" id="PF00128">
    <property type="entry name" value="Alpha-amylase"/>
    <property type="match status" value="1"/>
</dbReference>
<dbReference type="Pfam" id="PF09178">
    <property type="entry name" value="MGTA_C"/>
    <property type="match status" value="1"/>
</dbReference>
<dbReference type="PRINTS" id="PR00110">
    <property type="entry name" value="ALPHAAMYLASE"/>
</dbReference>
<dbReference type="SMART" id="SM00642">
    <property type="entry name" value="Aamy"/>
    <property type="match status" value="1"/>
</dbReference>
<dbReference type="SUPFAM" id="SSF51445">
    <property type="entry name" value="(Trans)glycosidases"/>
    <property type="match status" value="1"/>
</dbReference>
<dbReference type="SUPFAM" id="SSF51011">
    <property type="entry name" value="Glycosyl hydrolase domain"/>
    <property type="match status" value="1"/>
</dbReference>
<accession>O86956</accession>
<gene>
    <name type="primary">mgtA</name>
</gene>
<name>MGTA_THENE</name>